<comment type="function">
    <text evidence="1">Formation of pseudouridine at positions 38, 39 and 40 in the anticodon stem and loop of transfer RNAs.</text>
</comment>
<comment type="catalytic activity">
    <reaction evidence="1">
        <text>uridine(38/39/40) in tRNA = pseudouridine(38/39/40) in tRNA</text>
        <dbReference type="Rhea" id="RHEA:22376"/>
        <dbReference type="Rhea" id="RHEA-COMP:10085"/>
        <dbReference type="Rhea" id="RHEA-COMP:10087"/>
        <dbReference type="ChEBI" id="CHEBI:65314"/>
        <dbReference type="ChEBI" id="CHEBI:65315"/>
        <dbReference type="EC" id="5.4.99.12"/>
    </reaction>
</comment>
<comment type="subunit">
    <text evidence="1">Homodimer.</text>
</comment>
<comment type="similarity">
    <text evidence="1">Belongs to the tRNA pseudouridine synthase TruA family.</text>
</comment>
<feature type="chain" id="PRO_1000097769" description="tRNA pseudouridine synthase A">
    <location>
        <begin position="1"/>
        <end position="252"/>
    </location>
</feature>
<feature type="active site" description="Nucleophile" evidence="1">
    <location>
        <position position="52"/>
    </location>
</feature>
<feature type="binding site" evidence="1">
    <location>
        <position position="112"/>
    </location>
    <ligand>
        <name>substrate</name>
    </ligand>
</feature>
<keyword id="KW-0413">Isomerase</keyword>
<keyword id="KW-0819">tRNA processing</keyword>
<gene>
    <name evidence="1" type="primary">truA</name>
    <name type="ordered locus">PGN_0782</name>
</gene>
<accession>B2RIV6</accession>
<proteinExistence type="inferred from homology"/>
<sequence>MARFFIYLAYNGTRYSGWQTQPNAPSVQQTVEEAISTIVRQPVGVVGAGRTDAGVHAHEMVAHADLPCDTPAEAATLTERLNKLLPRDIVIYRMAPVKADAHARFDAISRTYHYYLTEQKDPFMEGLMLKTYRKLDFERMNEAAALLPRYIDFTSFSKLHTDVKTNNCRITEARWMPLAQTGQWVFSITADRFLRNMVRAIVGTLFHVGTGKLSITDFRDIIESQDRSRAGSSAPAHALYLERVVYPSDLFL</sequence>
<organism>
    <name type="scientific">Porphyromonas gingivalis (strain ATCC 33277 / DSM 20709 / CIP 103683 / JCM 12257 / NCTC 11834 / 2561)</name>
    <dbReference type="NCBI Taxonomy" id="431947"/>
    <lineage>
        <taxon>Bacteria</taxon>
        <taxon>Pseudomonadati</taxon>
        <taxon>Bacteroidota</taxon>
        <taxon>Bacteroidia</taxon>
        <taxon>Bacteroidales</taxon>
        <taxon>Porphyromonadaceae</taxon>
        <taxon>Porphyromonas</taxon>
    </lineage>
</organism>
<name>TRUA_PORG3</name>
<protein>
    <recommendedName>
        <fullName evidence="1">tRNA pseudouridine synthase A</fullName>
        <ecNumber evidence="1">5.4.99.12</ecNumber>
    </recommendedName>
    <alternativeName>
        <fullName evidence="1">tRNA pseudouridine(38-40) synthase</fullName>
    </alternativeName>
    <alternativeName>
        <fullName evidence="1">tRNA pseudouridylate synthase I</fullName>
    </alternativeName>
    <alternativeName>
        <fullName evidence="1">tRNA-uridine isomerase I</fullName>
    </alternativeName>
</protein>
<reference key="1">
    <citation type="journal article" date="2008" name="DNA Res.">
        <title>Determination of the genome sequence of Porphyromonas gingivalis strain ATCC 33277 and genomic comparison with strain W83 revealed extensive genome rearrangements in P. gingivalis.</title>
        <authorList>
            <person name="Naito M."/>
            <person name="Hirakawa H."/>
            <person name="Yamashita A."/>
            <person name="Ohara N."/>
            <person name="Shoji M."/>
            <person name="Yukitake H."/>
            <person name="Nakayama K."/>
            <person name="Toh H."/>
            <person name="Yoshimura F."/>
            <person name="Kuhara S."/>
            <person name="Hattori M."/>
            <person name="Hayashi T."/>
            <person name="Nakayama K."/>
        </authorList>
    </citation>
    <scope>NUCLEOTIDE SEQUENCE [LARGE SCALE GENOMIC DNA]</scope>
    <source>
        <strain>ATCC 33277 / DSM 20709 / CIP 103683 / JCM 12257 / NCTC 11834 / 2561</strain>
    </source>
</reference>
<evidence type="ECO:0000255" key="1">
    <source>
        <dbReference type="HAMAP-Rule" id="MF_00171"/>
    </source>
</evidence>
<dbReference type="EC" id="5.4.99.12" evidence="1"/>
<dbReference type="EMBL" id="AP009380">
    <property type="protein sequence ID" value="BAG33301.1"/>
    <property type="molecule type" value="Genomic_DNA"/>
</dbReference>
<dbReference type="RefSeq" id="WP_012457774.1">
    <property type="nucleotide sequence ID" value="NZ_CP025930.1"/>
</dbReference>
<dbReference type="SMR" id="B2RIV6"/>
<dbReference type="GeneID" id="29256001"/>
<dbReference type="KEGG" id="pgn:PGN_0782"/>
<dbReference type="eggNOG" id="COG0101">
    <property type="taxonomic scope" value="Bacteria"/>
</dbReference>
<dbReference type="HOGENOM" id="CLU_014673_0_1_10"/>
<dbReference type="OrthoDB" id="9811823at2"/>
<dbReference type="BioCyc" id="PGIN431947:G1G2V-858-MONOMER"/>
<dbReference type="Proteomes" id="UP000008842">
    <property type="component" value="Chromosome"/>
</dbReference>
<dbReference type="GO" id="GO:0003723">
    <property type="term" value="F:RNA binding"/>
    <property type="evidence" value="ECO:0007669"/>
    <property type="project" value="InterPro"/>
</dbReference>
<dbReference type="GO" id="GO:0160147">
    <property type="term" value="F:tRNA pseudouridine(38-40) synthase activity"/>
    <property type="evidence" value="ECO:0007669"/>
    <property type="project" value="UniProtKB-EC"/>
</dbReference>
<dbReference type="GO" id="GO:0031119">
    <property type="term" value="P:tRNA pseudouridine synthesis"/>
    <property type="evidence" value="ECO:0007669"/>
    <property type="project" value="UniProtKB-UniRule"/>
</dbReference>
<dbReference type="CDD" id="cd02570">
    <property type="entry name" value="PseudoU_synth_EcTruA"/>
    <property type="match status" value="1"/>
</dbReference>
<dbReference type="FunFam" id="3.30.70.580:FF:000001">
    <property type="entry name" value="tRNA pseudouridine synthase A"/>
    <property type="match status" value="1"/>
</dbReference>
<dbReference type="Gene3D" id="3.30.70.660">
    <property type="entry name" value="Pseudouridine synthase I, catalytic domain, C-terminal subdomain"/>
    <property type="match status" value="1"/>
</dbReference>
<dbReference type="Gene3D" id="3.30.70.580">
    <property type="entry name" value="Pseudouridine synthase I, catalytic domain, N-terminal subdomain"/>
    <property type="match status" value="1"/>
</dbReference>
<dbReference type="HAMAP" id="MF_00171">
    <property type="entry name" value="TruA"/>
    <property type="match status" value="1"/>
</dbReference>
<dbReference type="InterPro" id="IPR020103">
    <property type="entry name" value="PsdUridine_synth_cat_dom_sf"/>
</dbReference>
<dbReference type="InterPro" id="IPR001406">
    <property type="entry name" value="PsdUridine_synth_TruA"/>
</dbReference>
<dbReference type="InterPro" id="IPR020097">
    <property type="entry name" value="PsdUridine_synth_TruA_a/b_dom"/>
</dbReference>
<dbReference type="InterPro" id="IPR020095">
    <property type="entry name" value="PsdUridine_synth_TruA_C"/>
</dbReference>
<dbReference type="InterPro" id="IPR020094">
    <property type="entry name" value="TruA/RsuA/RluB/E/F_N"/>
</dbReference>
<dbReference type="NCBIfam" id="TIGR00071">
    <property type="entry name" value="hisT_truA"/>
    <property type="match status" value="1"/>
</dbReference>
<dbReference type="PANTHER" id="PTHR11142">
    <property type="entry name" value="PSEUDOURIDYLATE SYNTHASE"/>
    <property type="match status" value="1"/>
</dbReference>
<dbReference type="PANTHER" id="PTHR11142:SF0">
    <property type="entry name" value="TRNA PSEUDOURIDINE SYNTHASE-LIKE 1"/>
    <property type="match status" value="1"/>
</dbReference>
<dbReference type="Pfam" id="PF01416">
    <property type="entry name" value="PseudoU_synth_1"/>
    <property type="match status" value="2"/>
</dbReference>
<dbReference type="PIRSF" id="PIRSF001430">
    <property type="entry name" value="tRNA_psdUrid_synth"/>
    <property type="match status" value="1"/>
</dbReference>
<dbReference type="SUPFAM" id="SSF55120">
    <property type="entry name" value="Pseudouridine synthase"/>
    <property type="match status" value="1"/>
</dbReference>